<organism>
    <name type="scientific">Synechocystis sp. (strain ATCC 27184 / PCC 6803 / Kazusa)</name>
    <dbReference type="NCBI Taxonomy" id="1111708"/>
    <lineage>
        <taxon>Bacteria</taxon>
        <taxon>Bacillati</taxon>
        <taxon>Cyanobacteriota</taxon>
        <taxon>Cyanophyceae</taxon>
        <taxon>Synechococcales</taxon>
        <taxon>Merismopediaceae</taxon>
        <taxon>Synechocystis</taxon>
    </lineage>
</organism>
<feature type="chain" id="PRO_0000159840" description="Putative tRNA (cytidine(34)-2'-O)-methyltransferase">
    <location>
        <begin position="1"/>
        <end position="153"/>
    </location>
</feature>
<feature type="binding site" evidence="1">
    <location>
        <position position="102"/>
    </location>
    <ligand>
        <name>S-adenosyl-L-methionine</name>
        <dbReference type="ChEBI" id="CHEBI:59789"/>
    </ligand>
</feature>
<feature type="binding site" evidence="1">
    <location>
        <position position="122"/>
    </location>
    <ligand>
        <name>S-adenosyl-L-methionine</name>
        <dbReference type="ChEBI" id="CHEBI:59789"/>
    </ligand>
</feature>
<feature type="binding site" evidence="1">
    <location>
        <position position="131"/>
    </location>
    <ligand>
        <name>S-adenosyl-L-methionine</name>
        <dbReference type="ChEBI" id="CHEBI:59789"/>
    </ligand>
</feature>
<comment type="function">
    <text evidence="1">Could methylate the ribose at the nucleotide 34 wobble position in tRNA.</text>
</comment>
<comment type="catalytic activity">
    <reaction evidence="1">
        <text>cytidine(34) in tRNA + S-adenosyl-L-methionine = 2'-O-methylcytidine(34) in tRNA + S-adenosyl-L-homocysteine + H(+)</text>
        <dbReference type="Rhea" id="RHEA:43084"/>
        <dbReference type="Rhea" id="RHEA-COMP:10331"/>
        <dbReference type="Rhea" id="RHEA-COMP:10332"/>
        <dbReference type="ChEBI" id="CHEBI:15378"/>
        <dbReference type="ChEBI" id="CHEBI:57856"/>
        <dbReference type="ChEBI" id="CHEBI:59789"/>
        <dbReference type="ChEBI" id="CHEBI:74495"/>
        <dbReference type="ChEBI" id="CHEBI:82748"/>
        <dbReference type="EC" id="2.1.1.207"/>
    </reaction>
</comment>
<comment type="catalytic activity">
    <reaction evidence="1">
        <text>5-carboxymethylaminomethyluridine(34) in tRNA(Leu) + S-adenosyl-L-methionine = 5-carboxymethylaminomethyl-2'-O-methyluridine(34) in tRNA(Leu) + S-adenosyl-L-homocysteine + H(+)</text>
        <dbReference type="Rhea" id="RHEA:43088"/>
        <dbReference type="Rhea" id="RHEA-COMP:10333"/>
        <dbReference type="Rhea" id="RHEA-COMP:10334"/>
        <dbReference type="ChEBI" id="CHEBI:15378"/>
        <dbReference type="ChEBI" id="CHEBI:57856"/>
        <dbReference type="ChEBI" id="CHEBI:59789"/>
        <dbReference type="ChEBI" id="CHEBI:74508"/>
        <dbReference type="ChEBI" id="CHEBI:74511"/>
        <dbReference type="EC" id="2.1.1.207"/>
    </reaction>
</comment>
<comment type="subcellular location">
    <subcellularLocation>
        <location evidence="1">Cytoplasm</location>
    </subcellularLocation>
</comment>
<comment type="similarity">
    <text evidence="1">Belongs to the class IV-like SAM-binding methyltransferase superfamily. RNA methyltransferase TrmH family. TrmL subfamily.</text>
</comment>
<proteinExistence type="inferred from homology"/>
<name>TRML_SYNY3</name>
<sequence length="153" mass="17033">MVKLVLVNPQIPPNTGNIARTCAATGTELHLVGPLGFELGDRYLKRAGLDYWPYVDLHYHNSCEEFITHWRGQGGNLLGFSVTGTVNFWDYTYQSTDWLMMGSETDGLPQMMRDLSTQLLCIPMPHSEVRSLNLASSAAIALFEAGRQLRSLG</sequence>
<evidence type="ECO:0000255" key="1">
    <source>
        <dbReference type="HAMAP-Rule" id="MF_01885"/>
    </source>
</evidence>
<keyword id="KW-0963">Cytoplasm</keyword>
<keyword id="KW-0489">Methyltransferase</keyword>
<keyword id="KW-1185">Reference proteome</keyword>
<keyword id="KW-0949">S-adenosyl-L-methionine</keyword>
<keyword id="KW-0808">Transferase</keyword>
<keyword id="KW-0819">tRNA processing</keyword>
<dbReference type="EC" id="2.1.1.207" evidence="1"/>
<dbReference type="EMBL" id="BA000022">
    <property type="protein sequence ID" value="BAA18620.1"/>
    <property type="molecule type" value="Genomic_DNA"/>
</dbReference>
<dbReference type="PIR" id="S76491">
    <property type="entry name" value="S76491"/>
</dbReference>
<dbReference type="SMR" id="P74516"/>
<dbReference type="FunCoup" id="P74516">
    <property type="interactions" value="223"/>
</dbReference>
<dbReference type="IntAct" id="P74516">
    <property type="interactions" value="8"/>
</dbReference>
<dbReference type="STRING" id="1148.gene:10499503"/>
<dbReference type="PaxDb" id="1148-1653708"/>
<dbReference type="EnsemblBacteria" id="BAA18620">
    <property type="protein sequence ID" value="BAA18620"/>
    <property type="gene ID" value="BAA18620"/>
</dbReference>
<dbReference type="KEGG" id="syn:slr0992"/>
<dbReference type="eggNOG" id="COG0219">
    <property type="taxonomic scope" value="Bacteria"/>
</dbReference>
<dbReference type="InParanoid" id="P74516"/>
<dbReference type="PhylomeDB" id="P74516"/>
<dbReference type="Proteomes" id="UP000001425">
    <property type="component" value="Chromosome"/>
</dbReference>
<dbReference type="GO" id="GO:0005737">
    <property type="term" value="C:cytoplasm"/>
    <property type="evidence" value="ECO:0007669"/>
    <property type="project" value="UniProtKB-SubCell"/>
</dbReference>
<dbReference type="GO" id="GO:0003723">
    <property type="term" value="F:RNA binding"/>
    <property type="evidence" value="ECO:0007669"/>
    <property type="project" value="InterPro"/>
</dbReference>
<dbReference type="GO" id="GO:0141102">
    <property type="term" value="F:tRNA (5-carboxymethylaminomethyluridine(34)-2'-O)-methyltransferase activity"/>
    <property type="evidence" value="ECO:0007669"/>
    <property type="project" value="RHEA"/>
</dbReference>
<dbReference type="GO" id="GO:0141098">
    <property type="term" value="F:tRNA (cytidine(34)-2'-O)-methyltransferase activity"/>
    <property type="evidence" value="ECO:0007669"/>
    <property type="project" value="RHEA"/>
</dbReference>
<dbReference type="GO" id="GO:0002130">
    <property type="term" value="P:wobble position ribose methylation"/>
    <property type="evidence" value="ECO:0000318"/>
    <property type="project" value="GO_Central"/>
</dbReference>
<dbReference type="CDD" id="cd18094">
    <property type="entry name" value="SpoU-like_TrmL"/>
    <property type="match status" value="1"/>
</dbReference>
<dbReference type="FunFam" id="3.40.1280.10:FF:000002">
    <property type="entry name" value="Peptidylprolyl isomerase"/>
    <property type="match status" value="1"/>
</dbReference>
<dbReference type="Gene3D" id="3.40.1280.10">
    <property type="match status" value="1"/>
</dbReference>
<dbReference type="HAMAP" id="MF_01885">
    <property type="entry name" value="tRNA_methyltr_TrmL"/>
    <property type="match status" value="1"/>
</dbReference>
<dbReference type="InterPro" id="IPR029028">
    <property type="entry name" value="Alpha/beta_knot_MTases"/>
</dbReference>
<dbReference type="InterPro" id="IPR001537">
    <property type="entry name" value="SpoU_MeTrfase"/>
</dbReference>
<dbReference type="InterPro" id="IPR016914">
    <property type="entry name" value="TrmL"/>
</dbReference>
<dbReference type="InterPro" id="IPR029026">
    <property type="entry name" value="tRNA_m1G_MTases_N"/>
</dbReference>
<dbReference type="NCBIfam" id="TIGR00185">
    <property type="entry name" value="tRNA_yibK_trmL"/>
    <property type="match status" value="1"/>
</dbReference>
<dbReference type="PANTHER" id="PTHR42971">
    <property type="entry name" value="TRNA (CYTIDINE(34)-2'-O)-METHYLTRANSFERASE"/>
    <property type="match status" value="1"/>
</dbReference>
<dbReference type="PANTHER" id="PTHR42971:SF1">
    <property type="entry name" value="TRNA (CYTIDINE(34)-2'-O)-METHYLTRANSFERASE"/>
    <property type="match status" value="1"/>
</dbReference>
<dbReference type="Pfam" id="PF00588">
    <property type="entry name" value="SpoU_methylase"/>
    <property type="match status" value="1"/>
</dbReference>
<dbReference type="PIRSF" id="PIRSF029256">
    <property type="entry name" value="SpoU_TrmH_prd"/>
    <property type="match status" value="1"/>
</dbReference>
<dbReference type="SUPFAM" id="SSF75217">
    <property type="entry name" value="alpha/beta knot"/>
    <property type="match status" value="1"/>
</dbReference>
<protein>
    <recommendedName>
        <fullName evidence="1">Putative tRNA (cytidine(34)-2'-O)-methyltransferase</fullName>
        <ecNumber evidence="1">2.1.1.207</ecNumber>
    </recommendedName>
    <alternativeName>
        <fullName evidence="1">tRNA (cytidine/uridine-2'-O-)-methyltransferase</fullName>
    </alternativeName>
</protein>
<accession>P74516</accession>
<gene>
    <name type="ordered locus">slr0992</name>
</gene>
<reference key="1">
    <citation type="journal article" date="1996" name="DNA Res.">
        <title>Sequence analysis of the genome of the unicellular cyanobacterium Synechocystis sp. strain PCC6803. II. Sequence determination of the entire genome and assignment of potential protein-coding regions.</title>
        <authorList>
            <person name="Kaneko T."/>
            <person name="Sato S."/>
            <person name="Kotani H."/>
            <person name="Tanaka A."/>
            <person name="Asamizu E."/>
            <person name="Nakamura Y."/>
            <person name="Miyajima N."/>
            <person name="Hirosawa M."/>
            <person name="Sugiura M."/>
            <person name="Sasamoto S."/>
            <person name="Kimura T."/>
            <person name="Hosouchi T."/>
            <person name="Matsuno A."/>
            <person name="Muraki A."/>
            <person name="Nakazaki N."/>
            <person name="Naruo K."/>
            <person name="Okumura S."/>
            <person name="Shimpo S."/>
            <person name="Takeuchi C."/>
            <person name="Wada T."/>
            <person name="Watanabe A."/>
            <person name="Yamada M."/>
            <person name="Yasuda M."/>
            <person name="Tabata S."/>
        </authorList>
    </citation>
    <scope>NUCLEOTIDE SEQUENCE [LARGE SCALE GENOMIC DNA]</scope>
    <source>
        <strain>ATCC 27184 / PCC 6803 / Kazusa</strain>
    </source>
</reference>